<name>RL35_BORPA</name>
<dbReference type="EMBL" id="BX640431">
    <property type="protein sequence ID" value="CAE37888.1"/>
    <property type="molecule type" value="Genomic_DNA"/>
</dbReference>
<dbReference type="RefSeq" id="WP_003812834.1">
    <property type="nucleotide sequence ID" value="NC_002928.3"/>
</dbReference>
<dbReference type="SMR" id="Q7W7C9"/>
<dbReference type="GeneID" id="93204379"/>
<dbReference type="KEGG" id="bpa:BPP2596"/>
<dbReference type="HOGENOM" id="CLU_169643_1_0_4"/>
<dbReference type="Proteomes" id="UP000001421">
    <property type="component" value="Chromosome"/>
</dbReference>
<dbReference type="GO" id="GO:0022625">
    <property type="term" value="C:cytosolic large ribosomal subunit"/>
    <property type="evidence" value="ECO:0007669"/>
    <property type="project" value="TreeGrafter"/>
</dbReference>
<dbReference type="GO" id="GO:0003735">
    <property type="term" value="F:structural constituent of ribosome"/>
    <property type="evidence" value="ECO:0007669"/>
    <property type="project" value="InterPro"/>
</dbReference>
<dbReference type="GO" id="GO:0006412">
    <property type="term" value="P:translation"/>
    <property type="evidence" value="ECO:0007669"/>
    <property type="project" value="UniProtKB-UniRule"/>
</dbReference>
<dbReference type="FunFam" id="4.10.410.60:FF:000001">
    <property type="entry name" value="50S ribosomal protein L35"/>
    <property type="match status" value="1"/>
</dbReference>
<dbReference type="Gene3D" id="4.10.410.60">
    <property type="match status" value="1"/>
</dbReference>
<dbReference type="HAMAP" id="MF_00514">
    <property type="entry name" value="Ribosomal_bL35"/>
    <property type="match status" value="1"/>
</dbReference>
<dbReference type="InterPro" id="IPR001706">
    <property type="entry name" value="Ribosomal_bL35"/>
</dbReference>
<dbReference type="InterPro" id="IPR021137">
    <property type="entry name" value="Ribosomal_bL35-like"/>
</dbReference>
<dbReference type="InterPro" id="IPR018265">
    <property type="entry name" value="Ribosomal_bL35_CS"/>
</dbReference>
<dbReference type="InterPro" id="IPR037229">
    <property type="entry name" value="Ribosomal_bL35_sf"/>
</dbReference>
<dbReference type="NCBIfam" id="TIGR00001">
    <property type="entry name" value="rpmI_bact"/>
    <property type="match status" value="1"/>
</dbReference>
<dbReference type="PANTHER" id="PTHR33343">
    <property type="entry name" value="54S RIBOSOMAL PROTEIN BL35M"/>
    <property type="match status" value="1"/>
</dbReference>
<dbReference type="PANTHER" id="PTHR33343:SF1">
    <property type="entry name" value="LARGE RIBOSOMAL SUBUNIT PROTEIN BL35M"/>
    <property type="match status" value="1"/>
</dbReference>
<dbReference type="Pfam" id="PF01632">
    <property type="entry name" value="Ribosomal_L35p"/>
    <property type="match status" value="1"/>
</dbReference>
<dbReference type="PRINTS" id="PR00064">
    <property type="entry name" value="RIBOSOMALL35"/>
</dbReference>
<dbReference type="SUPFAM" id="SSF143034">
    <property type="entry name" value="L35p-like"/>
    <property type="match status" value="1"/>
</dbReference>
<dbReference type="PROSITE" id="PS00936">
    <property type="entry name" value="RIBOSOMAL_L35"/>
    <property type="match status" value="1"/>
</dbReference>
<feature type="chain" id="PRO_0000177334" description="Large ribosomal subunit protein bL35">
    <location>
        <begin position="1"/>
        <end position="65"/>
    </location>
</feature>
<feature type="region of interest" description="Disordered" evidence="2">
    <location>
        <begin position="1"/>
        <end position="25"/>
    </location>
</feature>
<feature type="compositionally biased region" description="Basic residues" evidence="2">
    <location>
        <begin position="1"/>
        <end position="16"/>
    </location>
</feature>
<keyword id="KW-0687">Ribonucleoprotein</keyword>
<keyword id="KW-0689">Ribosomal protein</keyword>
<proteinExistence type="inferred from homology"/>
<sequence>MPKMKTKKSAAKRFKVRGSGSIKRGQAFKRHILTKKTTKNKRQLRGSAAVHETNVASVKAMMPFA</sequence>
<reference key="1">
    <citation type="journal article" date="2003" name="Nat. Genet.">
        <title>Comparative analysis of the genome sequences of Bordetella pertussis, Bordetella parapertussis and Bordetella bronchiseptica.</title>
        <authorList>
            <person name="Parkhill J."/>
            <person name="Sebaihia M."/>
            <person name="Preston A."/>
            <person name="Murphy L.D."/>
            <person name="Thomson N.R."/>
            <person name="Harris D.E."/>
            <person name="Holden M.T.G."/>
            <person name="Churcher C.M."/>
            <person name="Bentley S.D."/>
            <person name="Mungall K.L."/>
            <person name="Cerdeno-Tarraga A.-M."/>
            <person name="Temple L."/>
            <person name="James K.D."/>
            <person name="Harris B."/>
            <person name="Quail M.A."/>
            <person name="Achtman M."/>
            <person name="Atkin R."/>
            <person name="Baker S."/>
            <person name="Basham D."/>
            <person name="Bason N."/>
            <person name="Cherevach I."/>
            <person name="Chillingworth T."/>
            <person name="Collins M."/>
            <person name="Cronin A."/>
            <person name="Davis P."/>
            <person name="Doggett J."/>
            <person name="Feltwell T."/>
            <person name="Goble A."/>
            <person name="Hamlin N."/>
            <person name="Hauser H."/>
            <person name="Holroyd S."/>
            <person name="Jagels K."/>
            <person name="Leather S."/>
            <person name="Moule S."/>
            <person name="Norberczak H."/>
            <person name="O'Neil S."/>
            <person name="Ormond D."/>
            <person name="Price C."/>
            <person name="Rabbinowitsch E."/>
            <person name="Rutter S."/>
            <person name="Sanders M."/>
            <person name="Saunders D."/>
            <person name="Seeger K."/>
            <person name="Sharp S."/>
            <person name="Simmonds M."/>
            <person name="Skelton J."/>
            <person name="Squares R."/>
            <person name="Squares S."/>
            <person name="Stevens K."/>
            <person name="Unwin L."/>
            <person name="Whitehead S."/>
            <person name="Barrell B.G."/>
            <person name="Maskell D.J."/>
        </authorList>
    </citation>
    <scope>NUCLEOTIDE SEQUENCE [LARGE SCALE GENOMIC DNA]</scope>
    <source>
        <strain>12822 / ATCC BAA-587 / NCTC 13253</strain>
    </source>
</reference>
<accession>Q7W7C9</accession>
<organism>
    <name type="scientific">Bordetella parapertussis (strain 12822 / ATCC BAA-587 / NCTC 13253)</name>
    <dbReference type="NCBI Taxonomy" id="257311"/>
    <lineage>
        <taxon>Bacteria</taxon>
        <taxon>Pseudomonadati</taxon>
        <taxon>Pseudomonadota</taxon>
        <taxon>Betaproteobacteria</taxon>
        <taxon>Burkholderiales</taxon>
        <taxon>Alcaligenaceae</taxon>
        <taxon>Bordetella</taxon>
    </lineage>
</organism>
<protein>
    <recommendedName>
        <fullName evidence="1">Large ribosomal subunit protein bL35</fullName>
    </recommendedName>
    <alternativeName>
        <fullName evidence="3">50S ribosomal protein L35</fullName>
    </alternativeName>
</protein>
<gene>
    <name evidence="1" type="primary">rpmI</name>
    <name type="ordered locus">BPP2596</name>
</gene>
<evidence type="ECO:0000255" key="1">
    <source>
        <dbReference type="HAMAP-Rule" id="MF_00514"/>
    </source>
</evidence>
<evidence type="ECO:0000256" key="2">
    <source>
        <dbReference type="SAM" id="MobiDB-lite"/>
    </source>
</evidence>
<evidence type="ECO:0000305" key="3"/>
<comment type="similarity">
    <text evidence="1">Belongs to the bacterial ribosomal protein bL35 family.</text>
</comment>